<evidence type="ECO:0000255" key="1">
    <source>
        <dbReference type="HAMAP-Rule" id="MF_00332"/>
    </source>
</evidence>
<dbReference type="EMBL" id="CP000463">
    <property type="protein sequence ID" value="ABJ04308.1"/>
    <property type="molecule type" value="Genomic_DNA"/>
</dbReference>
<dbReference type="SMR" id="Q07US6"/>
<dbReference type="STRING" id="316055.RPE_0349"/>
<dbReference type="KEGG" id="rpe:RPE_0349"/>
<dbReference type="eggNOG" id="COG0443">
    <property type="taxonomic scope" value="Bacteria"/>
</dbReference>
<dbReference type="HOGENOM" id="CLU_005965_2_1_5"/>
<dbReference type="OrthoDB" id="9766019at2"/>
<dbReference type="GO" id="GO:0005524">
    <property type="term" value="F:ATP binding"/>
    <property type="evidence" value="ECO:0007669"/>
    <property type="project" value="UniProtKB-UniRule"/>
</dbReference>
<dbReference type="GO" id="GO:0140662">
    <property type="term" value="F:ATP-dependent protein folding chaperone"/>
    <property type="evidence" value="ECO:0007669"/>
    <property type="project" value="InterPro"/>
</dbReference>
<dbReference type="GO" id="GO:0051082">
    <property type="term" value="F:unfolded protein binding"/>
    <property type="evidence" value="ECO:0007669"/>
    <property type="project" value="InterPro"/>
</dbReference>
<dbReference type="CDD" id="cd11733">
    <property type="entry name" value="ASKHA_NBD_HSP70_HSPA9"/>
    <property type="match status" value="1"/>
</dbReference>
<dbReference type="FunFam" id="2.60.34.10:FF:000014">
    <property type="entry name" value="Chaperone protein DnaK HSP70"/>
    <property type="match status" value="1"/>
</dbReference>
<dbReference type="FunFam" id="3.30.420.40:FF:000020">
    <property type="entry name" value="Chaperone protein HscA homolog"/>
    <property type="match status" value="1"/>
</dbReference>
<dbReference type="FunFam" id="1.20.1270.10:FF:000001">
    <property type="entry name" value="Molecular chaperone DnaK"/>
    <property type="match status" value="1"/>
</dbReference>
<dbReference type="FunFam" id="3.30.420.40:FF:000004">
    <property type="entry name" value="Molecular chaperone DnaK"/>
    <property type="match status" value="1"/>
</dbReference>
<dbReference type="FunFam" id="3.90.640.10:FF:000003">
    <property type="entry name" value="Molecular chaperone DnaK"/>
    <property type="match status" value="1"/>
</dbReference>
<dbReference type="Gene3D" id="1.20.1270.10">
    <property type="match status" value="1"/>
</dbReference>
<dbReference type="Gene3D" id="3.30.420.40">
    <property type="match status" value="2"/>
</dbReference>
<dbReference type="Gene3D" id="3.90.640.10">
    <property type="entry name" value="Actin, Chain A, domain 4"/>
    <property type="match status" value="1"/>
</dbReference>
<dbReference type="Gene3D" id="2.60.34.10">
    <property type="entry name" value="Substrate Binding Domain Of DNAk, Chain A, domain 1"/>
    <property type="match status" value="1"/>
</dbReference>
<dbReference type="HAMAP" id="MF_00332">
    <property type="entry name" value="DnaK"/>
    <property type="match status" value="1"/>
</dbReference>
<dbReference type="InterPro" id="IPR043129">
    <property type="entry name" value="ATPase_NBD"/>
</dbReference>
<dbReference type="InterPro" id="IPR012725">
    <property type="entry name" value="Chaperone_DnaK"/>
</dbReference>
<dbReference type="InterPro" id="IPR018181">
    <property type="entry name" value="Heat_shock_70_CS"/>
</dbReference>
<dbReference type="InterPro" id="IPR029048">
    <property type="entry name" value="HSP70_C_sf"/>
</dbReference>
<dbReference type="InterPro" id="IPR029047">
    <property type="entry name" value="HSP70_peptide-bd_sf"/>
</dbReference>
<dbReference type="InterPro" id="IPR013126">
    <property type="entry name" value="Hsp_70_fam"/>
</dbReference>
<dbReference type="NCBIfam" id="NF001413">
    <property type="entry name" value="PRK00290.1"/>
    <property type="match status" value="1"/>
</dbReference>
<dbReference type="NCBIfam" id="NF003520">
    <property type="entry name" value="PRK05183.1"/>
    <property type="match status" value="1"/>
</dbReference>
<dbReference type="NCBIfam" id="TIGR02350">
    <property type="entry name" value="prok_dnaK"/>
    <property type="match status" value="1"/>
</dbReference>
<dbReference type="PANTHER" id="PTHR19375">
    <property type="entry name" value="HEAT SHOCK PROTEIN 70KDA"/>
    <property type="match status" value="1"/>
</dbReference>
<dbReference type="Pfam" id="PF00012">
    <property type="entry name" value="HSP70"/>
    <property type="match status" value="1"/>
</dbReference>
<dbReference type="PRINTS" id="PR00301">
    <property type="entry name" value="HEATSHOCK70"/>
</dbReference>
<dbReference type="SUPFAM" id="SSF53067">
    <property type="entry name" value="Actin-like ATPase domain"/>
    <property type="match status" value="2"/>
</dbReference>
<dbReference type="SUPFAM" id="SSF100934">
    <property type="entry name" value="Heat shock protein 70kD (HSP70), C-terminal subdomain"/>
    <property type="match status" value="1"/>
</dbReference>
<dbReference type="SUPFAM" id="SSF100920">
    <property type="entry name" value="Heat shock protein 70kD (HSP70), peptide-binding domain"/>
    <property type="match status" value="1"/>
</dbReference>
<dbReference type="PROSITE" id="PS00297">
    <property type="entry name" value="HSP70_1"/>
    <property type="match status" value="1"/>
</dbReference>
<dbReference type="PROSITE" id="PS00329">
    <property type="entry name" value="HSP70_2"/>
    <property type="match status" value="1"/>
</dbReference>
<dbReference type="PROSITE" id="PS01036">
    <property type="entry name" value="HSP70_3"/>
    <property type="match status" value="1"/>
</dbReference>
<accession>Q07US6</accession>
<feature type="chain" id="PRO_1000059644" description="Chaperone protein DnaK">
    <location>
        <begin position="1"/>
        <end position="633"/>
    </location>
</feature>
<feature type="modified residue" description="Phosphothreonine; by autocatalysis" evidence="1">
    <location>
        <position position="198"/>
    </location>
</feature>
<sequence length="633" mass="68351">MGKVIGIDLGTTNSCVAVMDGKTPKVIENAEGMRTTPSIVAFSDDGERLVGQPAKRQAVTNPERTFFAVKRLIGRRYDDPMVEKDKKLVPYKIVKASNGDAWVEADANTYSPSQVSAFILQKMKETAEAHLGAKVDQAVITVPAYFNDAQRQATKDAGKIAGLEVLRIINEPTAAALAYGLDKAKAGVIAVYDLGGGTFDVSILEIGDGVFEVKSTNGDTFLGGEDFDMRLVSYLADEFQKEQGINLRNDKLALQRLKEAAEKAKIELSSTTQTEINLPFITADQTGPKHLTMKLTRAKFEALVDDLVQKTIEPCRKALKDAGLTAGEIGEVVLVGGMTRMPKVQEVVKQLFGKEPHKGVNPDEVVAIGAAIQAGVLQGDVKDVLLLDVTPLSLGIETLGGVFTRIIDRNTTIPTKKSQVFSTAEDNQNAVTIRVFQGEREMAADNKVLGQFDLMGIPPSPRGMPQIEVTFDIDANGIVNVSARDKATGKEQQIRIQASGGLSEADIDKMVKDAEINAAEDKKRREAVDAKNHADALVHSTEKALAEHGAKVEEPERRAIEDALSDLREALKGDDAEAIKTKTNTLAQASMKLGEAMYKQQAEADAAKDAAKDDVVDAEFTEVDDDKNTKKSA</sequence>
<proteinExistence type="inferred from homology"/>
<reference key="1">
    <citation type="submission" date="2006-09" db="EMBL/GenBank/DDBJ databases">
        <title>Complete sequence of Rhodopseudomonas palustris BisA53.</title>
        <authorList>
            <consortium name="US DOE Joint Genome Institute"/>
            <person name="Copeland A."/>
            <person name="Lucas S."/>
            <person name="Lapidus A."/>
            <person name="Barry K."/>
            <person name="Detter J.C."/>
            <person name="Glavina del Rio T."/>
            <person name="Hammon N."/>
            <person name="Israni S."/>
            <person name="Dalin E."/>
            <person name="Tice H."/>
            <person name="Pitluck S."/>
            <person name="Chain P."/>
            <person name="Malfatti S."/>
            <person name="Shin M."/>
            <person name="Vergez L."/>
            <person name="Schmutz J."/>
            <person name="Larimer F."/>
            <person name="Land M."/>
            <person name="Hauser L."/>
            <person name="Pelletier D.A."/>
            <person name="Kyrpides N."/>
            <person name="Kim E."/>
            <person name="Harwood C.S."/>
            <person name="Oda Y."/>
            <person name="Richardson P."/>
        </authorList>
    </citation>
    <scope>NUCLEOTIDE SEQUENCE [LARGE SCALE GENOMIC DNA]</scope>
    <source>
        <strain>BisA53</strain>
    </source>
</reference>
<name>DNAK_RHOP5</name>
<protein>
    <recommendedName>
        <fullName evidence="1">Chaperone protein DnaK</fullName>
    </recommendedName>
    <alternativeName>
        <fullName evidence="1">HSP70</fullName>
    </alternativeName>
    <alternativeName>
        <fullName evidence="1">Heat shock 70 kDa protein</fullName>
    </alternativeName>
    <alternativeName>
        <fullName evidence="1">Heat shock protein 70</fullName>
    </alternativeName>
</protein>
<keyword id="KW-0067">ATP-binding</keyword>
<keyword id="KW-0143">Chaperone</keyword>
<keyword id="KW-0547">Nucleotide-binding</keyword>
<keyword id="KW-0597">Phosphoprotein</keyword>
<keyword id="KW-0346">Stress response</keyword>
<organism>
    <name type="scientific">Rhodopseudomonas palustris (strain BisA53)</name>
    <dbReference type="NCBI Taxonomy" id="316055"/>
    <lineage>
        <taxon>Bacteria</taxon>
        <taxon>Pseudomonadati</taxon>
        <taxon>Pseudomonadota</taxon>
        <taxon>Alphaproteobacteria</taxon>
        <taxon>Hyphomicrobiales</taxon>
        <taxon>Nitrobacteraceae</taxon>
        <taxon>Rhodopseudomonas</taxon>
    </lineage>
</organism>
<comment type="function">
    <text evidence="1">Acts as a chaperone.</text>
</comment>
<comment type="induction">
    <text evidence="1">By stress conditions e.g. heat shock.</text>
</comment>
<comment type="similarity">
    <text evidence="1">Belongs to the heat shock protein 70 family.</text>
</comment>
<gene>
    <name evidence="1" type="primary">dnaK</name>
    <name type="ordered locus">RPE_0349</name>
</gene>